<comment type="function">
    <text evidence="1">One of two assembly initiator proteins, it binds directly to the 5'-end of the 23S rRNA, where it nucleates assembly of the 50S subunit.</text>
</comment>
<comment type="function">
    <text evidence="1">One of the proteins that surrounds the polypeptide exit tunnel on the outside of the subunit.</text>
</comment>
<comment type="subunit">
    <text evidence="1">Part of the 50S ribosomal subunit.</text>
</comment>
<comment type="similarity">
    <text evidence="1">Belongs to the universal ribosomal protein uL24 family.</text>
</comment>
<keyword id="KW-0687">Ribonucleoprotein</keyword>
<keyword id="KW-0689">Ribosomal protein</keyword>
<keyword id="KW-0694">RNA-binding</keyword>
<keyword id="KW-0699">rRNA-binding</keyword>
<name>RL24_LYSSC</name>
<accession>B1HMW9</accession>
<proteinExistence type="inferred from homology"/>
<sequence>MHVKKGDKVKVITGKDKGKEGVILAAFPKQDRVLVEGVNIVKKHVKPNQLNPQGGIVSQEAAIHVSNVMLIDPKSGEPTRVGYKIENGKKVRVAKKSGAVID</sequence>
<dbReference type="EMBL" id="CP000817">
    <property type="protein sequence ID" value="ACA42047.1"/>
    <property type="molecule type" value="Genomic_DNA"/>
</dbReference>
<dbReference type="RefSeq" id="WP_004233652.1">
    <property type="nucleotide sequence ID" value="NC_010382.1"/>
</dbReference>
<dbReference type="SMR" id="B1HMW9"/>
<dbReference type="EnsemblBacteria" id="ACA42047">
    <property type="protein sequence ID" value="ACA42047"/>
    <property type="gene ID" value="Bsph_4603"/>
</dbReference>
<dbReference type="GeneID" id="74907554"/>
<dbReference type="KEGG" id="lsp:Bsph_4603"/>
<dbReference type="HOGENOM" id="CLU_093315_2_0_9"/>
<dbReference type="Proteomes" id="UP000002164">
    <property type="component" value="Chromosome"/>
</dbReference>
<dbReference type="GO" id="GO:1990904">
    <property type="term" value="C:ribonucleoprotein complex"/>
    <property type="evidence" value="ECO:0007669"/>
    <property type="project" value="UniProtKB-KW"/>
</dbReference>
<dbReference type="GO" id="GO:0005840">
    <property type="term" value="C:ribosome"/>
    <property type="evidence" value="ECO:0007669"/>
    <property type="project" value="UniProtKB-KW"/>
</dbReference>
<dbReference type="GO" id="GO:0019843">
    <property type="term" value="F:rRNA binding"/>
    <property type="evidence" value="ECO:0007669"/>
    <property type="project" value="UniProtKB-UniRule"/>
</dbReference>
<dbReference type="GO" id="GO:0003735">
    <property type="term" value="F:structural constituent of ribosome"/>
    <property type="evidence" value="ECO:0007669"/>
    <property type="project" value="InterPro"/>
</dbReference>
<dbReference type="GO" id="GO:0006412">
    <property type="term" value="P:translation"/>
    <property type="evidence" value="ECO:0007669"/>
    <property type="project" value="UniProtKB-UniRule"/>
</dbReference>
<dbReference type="CDD" id="cd06089">
    <property type="entry name" value="KOW_RPL26"/>
    <property type="match status" value="1"/>
</dbReference>
<dbReference type="FunFam" id="2.30.30.30:FF:000004">
    <property type="entry name" value="50S ribosomal protein L24"/>
    <property type="match status" value="1"/>
</dbReference>
<dbReference type="Gene3D" id="2.30.30.30">
    <property type="match status" value="1"/>
</dbReference>
<dbReference type="HAMAP" id="MF_01326_B">
    <property type="entry name" value="Ribosomal_uL24_B"/>
    <property type="match status" value="1"/>
</dbReference>
<dbReference type="InterPro" id="IPR005824">
    <property type="entry name" value="KOW"/>
</dbReference>
<dbReference type="InterPro" id="IPR014722">
    <property type="entry name" value="Rib_uL2_dom2"/>
</dbReference>
<dbReference type="InterPro" id="IPR003256">
    <property type="entry name" value="Ribosomal_uL24"/>
</dbReference>
<dbReference type="InterPro" id="IPR005825">
    <property type="entry name" value="Ribosomal_uL24_CS"/>
</dbReference>
<dbReference type="InterPro" id="IPR041988">
    <property type="entry name" value="Ribosomal_uL24_KOW"/>
</dbReference>
<dbReference type="InterPro" id="IPR008991">
    <property type="entry name" value="Translation_prot_SH3-like_sf"/>
</dbReference>
<dbReference type="NCBIfam" id="TIGR01079">
    <property type="entry name" value="rplX_bact"/>
    <property type="match status" value="1"/>
</dbReference>
<dbReference type="PANTHER" id="PTHR12903">
    <property type="entry name" value="MITOCHONDRIAL RIBOSOMAL PROTEIN L24"/>
    <property type="match status" value="1"/>
</dbReference>
<dbReference type="Pfam" id="PF00467">
    <property type="entry name" value="KOW"/>
    <property type="match status" value="1"/>
</dbReference>
<dbReference type="Pfam" id="PF17136">
    <property type="entry name" value="ribosomal_L24"/>
    <property type="match status" value="1"/>
</dbReference>
<dbReference type="SMART" id="SM00739">
    <property type="entry name" value="KOW"/>
    <property type="match status" value="1"/>
</dbReference>
<dbReference type="SUPFAM" id="SSF50104">
    <property type="entry name" value="Translation proteins SH3-like domain"/>
    <property type="match status" value="1"/>
</dbReference>
<dbReference type="PROSITE" id="PS01108">
    <property type="entry name" value="RIBOSOMAL_L24"/>
    <property type="match status" value="1"/>
</dbReference>
<feature type="chain" id="PRO_1000142012" description="Large ribosomal subunit protein uL24">
    <location>
        <begin position="1"/>
        <end position="102"/>
    </location>
</feature>
<evidence type="ECO:0000255" key="1">
    <source>
        <dbReference type="HAMAP-Rule" id="MF_01326"/>
    </source>
</evidence>
<evidence type="ECO:0000305" key="2"/>
<reference key="1">
    <citation type="journal article" date="2008" name="J. Bacteriol.">
        <title>Complete genome sequence of the mosquitocidal bacterium Bacillus sphaericus C3-41 and comparison with those of closely related Bacillus species.</title>
        <authorList>
            <person name="Hu X."/>
            <person name="Fan W."/>
            <person name="Han B."/>
            <person name="Liu H."/>
            <person name="Zheng D."/>
            <person name="Li Q."/>
            <person name="Dong W."/>
            <person name="Yan J."/>
            <person name="Gao M."/>
            <person name="Berry C."/>
            <person name="Yuan Z."/>
        </authorList>
    </citation>
    <scope>NUCLEOTIDE SEQUENCE [LARGE SCALE GENOMIC DNA]</scope>
    <source>
        <strain>C3-41</strain>
    </source>
</reference>
<gene>
    <name evidence="1" type="primary">rplX</name>
    <name type="ordered locus">Bsph_4603</name>
</gene>
<protein>
    <recommendedName>
        <fullName evidence="1">Large ribosomal subunit protein uL24</fullName>
    </recommendedName>
    <alternativeName>
        <fullName evidence="2">50S ribosomal protein L24</fullName>
    </alternativeName>
</protein>
<organism>
    <name type="scientific">Lysinibacillus sphaericus (strain C3-41)</name>
    <dbReference type="NCBI Taxonomy" id="444177"/>
    <lineage>
        <taxon>Bacteria</taxon>
        <taxon>Bacillati</taxon>
        <taxon>Bacillota</taxon>
        <taxon>Bacilli</taxon>
        <taxon>Bacillales</taxon>
        <taxon>Bacillaceae</taxon>
        <taxon>Lysinibacillus</taxon>
    </lineage>
</organism>